<name>PPK5_DERER</name>
<organism>
    <name type="scientific">Deropeltis erythrocephala</name>
    <name type="common">Black velvet roach</name>
    <dbReference type="NCBI Taxonomy" id="303918"/>
    <lineage>
        <taxon>Eukaryota</taxon>
        <taxon>Metazoa</taxon>
        <taxon>Ecdysozoa</taxon>
        <taxon>Arthropoda</taxon>
        <taxon>Hexapoda</taxon>
        <taxon>Insecta</taxon>
        <taxon>Pterygota</taxon>
        <taxon>Neoptera</taxon>
        <taxon>Polyneoptera</taxon>
        <taxon>Dictyoptera</taxon>
        <taxon>Blattodea</taxon>
        <taxon>Blattoidea</taxon>
        <taxon>Blattidae</taxon>
        <taxon>Blattinae</taxon>
        <taxon>Deropeltis</taxon>
    </lineage>
</organism>
<protein>
    <recommendedName>
        <fullName evidence="1">Pyrokinin-5</fullName>
    </recommendedName>
    <alternativeName>
        <fullName evidence="4">DerEr-Capa-PK</fullName>
    </alternativeName>
    <alternativeName>
        <fullName evidence="1">FXPRL-amide</fullName>
    </alternativeName>
</protein>
<feature type="peptide" id="PRO_0000378687" description="Pyrokinin-5" evidence="3">
    <location>
        <begin position="1"/>
        <end position="17"/>
    </location>
</feature>
<feature type="modified residue" description="Leucine amide" evidence="3">
    <location>
        <position position="17"/>
    </location>
</feature>
<comment type="function">
    <text evidence="1">Myoactive.</text>
</comment>
<comment type="subcellular location">
    <subcellularLocation>
        <location evidence="5">Secreted</location>
    </subcellularLocation>
</comment>
<comment type="similarity">
    <text evidence="2">Belongs to the pyrokinin family.</text>
</comment>
<evidence type="ECO:0000250" key="1">
    <source>
        <dbReference type="UniProtKB" id="P82617"/>
    </source>
</evidence>
<evidence type="ECO:0000255" key="2"/>
<evidence type="ECO:0000269" key="3">
    <source>
    </source>
</evidence>
<evidence type="ECO:0000303" key="4">
    <source>
    </source>
</evidence>
<evidence type="ECO:0000305" key="5"/>
<sequence>GGGGSGETSGMWFGPRL</sequence>
<accession>P85584</accession>
<reference evidence="5" key="1">
    <citation type="journal article" date="2009" name="BMC Evol. Biol.">
        <title>A proteomic approach for studying insect phylogeny: CAPA peptides of ancient insect taxa (Dictyoptera, Blattoptera) as a test case.</title>
        <authorList>
            <person name="Roth S."/>
            <person name="Fromm B."/>
            <person name="Gaede G."/>
            <person name="Predel R."/>
        </authorList>
    </citation>
    <scope>PROTEIN SEQUENCE</scope>
    <scope>AMIDATION AT LEU-17</scope>
    <source>
        <tissue evidence="3">Abdominal perisympathetic organs</tissue>
    </source>
</reference>
<dbReference type="GO" id="GO:0005576">
    <property type="term" value="C:extracellular region"/>
    <property type="evidence" value="ECO:0007669"/>
    <property type="project" value="UniProtKB-SubCell"/>
</dbReference>
<dbReference type="GO" id="GO:0005184">
    <property type="term" value="F:neuropeptide hormone activity"/>
    <property type="evidence" value="ECO:0007669"/>
    <property type="project" value="InterPro"/>
</dbReference>
<dbReference type="GO" id="GO:0007218">
    <property type="term" value="P:neuropeptide signaling pathway"/>
    <property type="evidence" value="ECO:0007669"/>
    <property type="project" value="UniProtKB-KW"/>
</dbReference>
<dbReference type="InterPro" id="IPR001484">
    <property type="entry name" value="Pyrokinin_CS"/>
</dbReference>
<dbReference type="PROSITE" id="PS00539">
    <property type="entry name" value="PYROKININ"/>
    <property type="match status" value="1"/>
</dbReference>
<keyword id="KW-0027">Amidation</keyword>
<keyword id="KW-0903">Direct protein sequencing</keyword>
<keyword id="KW-0527">Neuropeptide</keyword>
<keyword id="KW-0964">Secreted</keyword>
<proteinExistence type="evidence at protein level"/>